<name>PHOSP_HRSV</name>
<reference key="1">
    <citation type="journal article" date="1985" name="J. Gen. Virol.">
        <title>Nucleotide sequence of the respiratory syncytial virus phosphoprotein gene.</title>
        <authorList>
            <person name="Lambden P.R."/>
        </authorList>
    </citation>
    <scope>NUCLEOTIDE SEQUENCE [MRNA]</scope>
</reference>
<reference key="2">
    <citation type="journal article" date="2005" name="J. Virol.">
        <title>Respiratory syncytial virus nonstructural proteins NS1 and NS2 mediate inhibition of Stat2 expression and alpha/beta interferon responsiveness.</title>
        <authorList>
            <person name="Lo M.S."/>
            <person name="Brazas R.M."/>
            <person name="Holtzman M.J."/>
        </authorList>
    </citation>
    <scope>NUCLEOTIDE SEQUENCE [LARGE SCALE GENOMIC DNA]</scope>
    <source>
        <strain>ATCC VR-26</strain>
    </source>
</reference>
<reference key="3">
    <citation type="journal article" date="1988" name="Virus Res.">
        <title>Nucleotide sequence of the fusion and phosphoprotein genes of human respiratory syncytial (RS) virus Long strain: evidence of subtype genetic heterogeneity.</title>
        <authorList>
            <person name="Lopez J.A."/>
            <person name="Villanueva N."/>
            <person name="Melero J.A."/>
            <person name="Portela A."/>
        </authorList>
    </citation>
    <scope>NUCLEOTIDE SEQUENCE [GENOMIC RNA]</scope>
    <scope>VARIANT THR-46</scope>
</reference>
<reference key="4">
    <citation type="journal article" date="1991" name="J. Gen. Virol.">
        <title>Location of phosphorylated residues in human respiratory syncytial virus phosphoprotein.</title>
        <authorList>
            <person name="Navarro J."/>
            <person name="Lopez-Otin C."/>
            <person name="Villanueva N."/>
        </authorList>
    </citation>
    <scope>PHOSPHORYLATION AT SER-116; SER-117 AND SER-119</scope>
</reference>
<reference key="5">
    <citation type="journal article" date="2004" name="J. Gen. Virol.">
        <title>Biochemical characterization of the respiratory syncytial virus P-P and P-N protein complexes and localization of the P protein oligomerization domain.</title>
        <authorList>
            <person name="Castagne N."/>
            <person name="Barbier A."/>
            <person name="Bernard J."/>
            <person name="Rezaei H."/>
            <person name="Huet J.C."/>
            <person name="Henry C."/>
            <person name="Da Costa B."/>
            <person name="Eleouet J.F."/>
        </authorList>
    </citation>
    <scope>DOMAIN</scope>
</reference>
<gene>
    <name type="primary">P</name>
</gene>
<feature type="chain" id="PRO_0000142724" description="Phosphoprotein">
    <location>
        <begin position="1"/>
        <end position="241"/>
    </location>
</feature>
<feature type="region of interest" description="Binding to monomeric RNA-free nucleoprotein" evidence="1">
    <location>
        <begin position="1"/>
        <end position="30"/>
    </location>
</feature>
<feature type="region of interest" description="Important for viral particle assembly" evidence="1">
    <location>
        <begin position="39"/>
        <end position="57"/>
    </location>
</feature>
<feature type="region of interest" description="Disordered" evidence="2">
    <location>
        <begin position="58"/>
        <end position="77"/>
    </location>
</feature>
<feature type="region of interest" description="Binding to host phosphatase PP1" evidence="1">
    <location>
        <begin position="81"/>
        <end position="87"/>
    </location>
</feature>
<feature type="region of interest" description="Binding to protein M2-1" evidence="1">
    <location>
        <begin position="90"/>
        <end position="110"/>
    </location>
</feature>
<feature type="region of interest" description="Oligomerization and binding to RNA-directed RNA polymerase L" evidence="1">
    <location>
        <begin position="120"/>
        <end position="160"/>
    </location>
</feature>
<feature type="region of interest" description="Disordered" evidence="2">
    <location>
        <begin position="201"/>
        <end position="241"/>
    </location>
</feature>
<feature type="region of interest" description="Binding to RNA-directed RNA polymerase L" evidence="1">
    <location>
        <begin position="216"/>
        <end position="232"/>
    </location>
</feature>
<feature type="region of interest" description="Binding to the N-RNA complex" evidence="1">
    <location>
        <begin position="232"/>
        <end position="241"/>
    </location>
</feature>
<feature type="compositionally biased region" description="Polar residues" evidence="2">
    <location>
        <begin position="58"/>
        <end position="67"/>
    </location>
</feature>
<feature type="compositionally biased region" description="Basic and acidic residues" evidence="2">
    <location>
        <begin position="201"/>
        <end position="211"/>
    </location>
</feature>
<feature type="compositionally biased region" description="Polar residues" evidence="2">
    <location>
        <begin position="213"/>
        <end position="223"/>
    </location>
</feature>
<feature type="compositionally biased region" description="Acidic residues" evidence="2">
    <location>
        <begin position="230"/>
        <end position="241"/>
    </location>
</feature>
<feature type="site" description="Interaction with protein M2-1" evidence="1">
    <location>
        <position position="108"/>
    </location>
</feature>
<feature type="modified residue" description="Phosphothreonine; by host" evidence="1">
    <location>
        <position position="108"/>
    </location>
</feature>
<feature type="modified residue" description="Phosphoserine; by host" evidence="4">
    <location>
        <position position="116"/>
    </location>
</feature>
<feature type="modified residue" description="Phosphoserine; by host" evidence="4">
    <location>
        <position position="117"/>
    </location>
</feature>
<feature type="modified residue" description="Phosphoserine; by host" evidence="4">
    <location>
        <position position="119"/>
    </location>
</feature>
<feature type="modified residue" description="Phosphoserine; by host" evidence="1">
    <location>
        <position position="232"/>
    </location>
</feature>
<feature type="modified residue" description="Phosphoserine; by host" evidence="1">
    <location>
        <position position="237"/>
    </location>
</feature>
<feature type="sequence variant" evidence="5">
    <original>I</original>
    <variation>T</variation>
    <location>
        <position position="46"/>
    </location>
</feature>
<feature type="sequence variant" evidence="6">
    <original>NA</original>
    <variation>TV</variation>
    <location>
        <begin position="72"/>
        <end position="73"/>
    </location>
</feature>
<organism>
    <name type="scientific">Human respiratory syncytial virus</name>
    <dbReference type="NCBI Taxonomy" id="11250"/>
    <lineage>
        <taxon>Viruses</taxon>
        <taxon>Riboviria</taxon>
        <taxon>Orthornavirae</taxon>
        <taxon>Negarnaviricota</taxon>
        <taxon>Haploviricotina</taxon>
        <taxon>Monjiviricetes</taxon>
        <taxon>Mononegavirales</taxon>
        <taxon>Pneumoviridae</taxon>
        <taxon>Orthopneumovirus</taxon>
        <taxon>Orthopneumovirus hominis</taxon>
    </lineage>
</organism>
<keyword id="KW-1035">Host cytoplasm</keyword>
<keyword id="KW-0945">Host-virus interaction</keyword>
<keyword id="KW-1100">Inhibition of host NF-kappa-B by virus</keyword>
<keyword id="KW-0597">Phosphoprotein</keyword>
<keyword id="KW-0693">Viral RNA replication</keyword>
<keyword id="KW-0946">Virion</keyword>
<evidence type="ECO:0000250" key="1">
    <source>
        <dbReference type="UniProtKB" id="P03421"/>
    </source>
</evidence>
<evidence type="ECO:0000256" key="2">
    <source>
        <dbReference type="SAM" id="MobiDB-lite"/>
    </source>
</evidence>
<evidence type="ECO:0000269" key="3">
    <source>
    </source>
</evidence>
<evidence type="ECO:0000269" key="4">
    <source>
    </source>
</evidence>
<evidence type="ECO:0000269" key="5">
    <source>
    </source>
</evidence>
<evidence type="ECO:0000305" key="6"/>
<dbReference type="EMBL" id="M29342">
    <property type="protein sequence ID" value="AAA47416.1"/>
    <property type="molecule type" value="mRNA"/>
</dbReference>
<dbReference type="EMBL" id="AY911262">
    <property type="protein sequence ID" value="AAX23990.1"/>
    <property type="molecule type" value="Genomic_RNA"/>
</dbReference>
<dbReference type="EMBL" id="M22644">
    <property type="protein sequence ID" value="AAA47415.1"/>
    <property type="molecule type" value="Genomic_RNA"/>
</dbReference>
<dbReference type="PIR" id="S07428">
    <property type="entry name" value="RRNZPP"/>
</dbReference>
<dbReference type="BMRB" id="P12579"/>
<dbReference type="SASBDB" id="P12579"/>
<dbReference type="SMR" id="P12579"/>
<dbReference type="iPTMnet" id="P12579"/>
<dbReference type="Proteomes" id="UP000158141">
    <property type="component" value="Genome"/>
</dbReference>
<dbReference type="GO" id="GO:0030430">
    <property type="term" value="C:host cell cytoplasm"/>
    <property type="evidence" value="ECO:0000314"/>
    <property type="project" value="CAFA"/>
</dbReference>
<dbReference type="GO" id="GO:0044423">
    <property type="term" value="C:virion component"/>
    <property type="evidence" value="ECO:0007669"/>
    <property type="project" value="UniProtKB-KW"/>
</dbReference>
<dbReference type="GO" id="GO:0042803">
    <property type="term" value="F:protein homodimerization activity"/>
    <property type="evidence" value="ECO:0000314"/>
    <property type="project" value="CAFA"/>
</dbReference>
<dbReference type="GO" id="GO:0003968">
    <property type="term" value="F:RNA-directed RNA polymerase activity"/>
    <property type="evidence" value="ECO:0007669"/>
    <property type="project" value="InterPro"/>
</dbReference>
<dbReference type="GO" id="GO:0085034">
    <property type="term" value="P:symbiont-mediated suppression of host NF-kappaB cascade"/>
    <property type="evidence" value="ECO:0007669"/>
    <property type="project" value="UniProtKB-KW"/>
</dbReference>
<dbReference type="DisProt" id="DP00447"/>
<dbReference type="InterPro" id="IPR003487">
    <property type="entry name" value="Pprotein_pneumovir"/>
</dbReference>
<dbReference type="Pfam" id="PF02478">
    <property type="entry name" value="Pneumo_phosprot"/>
    <property type="match status" value="1"/>
</dbReference>
<organismHost>
    <name type="scientific">Homo sapiens</name>
    <name type="common">Human</name>
    <dbReference type="NCBI Taxonomy" id="9606"/>
</organismHost>
<comment type="function">
    <text evidence="1">Plays critical roles in regulating RNA replication and transcription through its interactions with multiple proteins. Tethers the RNA-directed RNA polymerase L to the nucleoprotein-RNA complex. Recruits the M2-1 protein, a processivity factor that is required for efficient transcription of viral RNA. Acts as a chaperone for neo-synthesized nucleoprotein by forming an N-P complex that preserves N in a monomeric and RNA-free state and prevents the association of nascent N with host cell RNAs. Recruits the host phosphatase PP1 to inclusion bodies to regulate viral transcription. Together with the nucleoprotein, sequesters host NF-kappa-B in inclusion bodies (IBs) thereby inhibiting this host defense pathway.</text>
</comment>
<comment type="subunit">
    <text evidence="1">Homotetramer. Interacts with protein M2-1; the interaction between the two tetramers is required for the anti-termination and elongation transcriptional activities of protein M2-1. Interacts with host phosphatase PP1; this interaction recruits PP1 to the inclusion bodies. Formation of a complex PP1/M2-1/P allows P to target host PP1 phosphatase to the M2-1 substrate. Interacts (via C-terminus) with the nucleoprotein N (via N-terminus); the phosphorylated phosphoprotein P binds to N-RNA complex. Interacts (via N-terminus) with the monomeric RNA-free nucleoprotein N. Interacts (via C-terminus) with RNA-directed RNA polymerase L; the association of P and L forms the polymerase complex.</text>
</comment>
<comment type="subcellular location">
    <subcellularLocation>
        <location evidence="1">Virion</location>
    </subcellularLocation>
    <subcellularLocation>
        <location evidence="1">Host cytoplasm</location>
    </subcellularLocation>
    <text evidence="1">Localizes in cytoplasmic inclusion bodies.</text>
</comment>
<comment type="domain">
    <text evidence="1 3">The N-terminus is important for viral particle assembly. The oligomerization region is central (PubMed:15166449). The C-terminus part contains binding regions for the RNA-directed RNA polymerase L and the nucleoprotein (By similarity).</text>
</comment>
<comment type="PTM">
    <text evidence="1">Constitutively phosphorylated by host. Phosphorylation at S-116, S-117, S-119, S-232 and S-237 is required for transcription inhibition by M2-2 and viral particle egress. Phosphorylation at S-232 and S-237 increases the affinity of the binding to the nucleoprotein.</text>
</comment>
<comment type="similarity">
    <text evidence="6">Belongs to the pneumoviridae phosphoprotein P family.</text>
</comment>
<accession>P12579</accession>
<accession>P14156</accession>
<accession>Q4KRW8</accession>
<proteinExistence type="evidence at protein level"/>
<protein>
    <recommendedName>
        <fullName>Phosphoprotein</fullName>
        <shortName>Protein P</shortName>
    </recommendedName>
</protein>
<sequence length="241" mass="27159">MEKFAPEFHGEDANNRATKFLESIKGKFTSPKDPKKKDSIISVNSIDIEVTKESPITSNSTIINPTNETDDNAGNKPNYQRKPLVSFKEDPIPSDNPFSKLYKETIETFDNNEEESSYSYEEINDQTNDNITARLDRIDEKLSEILGMLHTLVVASAGPTSARDGIRDAMVGLREEMIEKIRTEALMTNDRLEAMARLRNEESEKMAKDTSDEVSLNPTSEKLNNLLEGNDSDNDLSLEDF</sequence>